<evidence type="ECO:0000255" key="1">
    <source>
        <dbReference type="HAMAP-Rule" id="MF_00470"/>
    </source>
</evidence>
<feature type="chain" id="PRO_1000013801" description="o-succinylbenzoate synthase">
    <location>
        <begin position="1"/>
        <end position="320"/>
    </location>
</feature>
<feature type="active site" description="Proton donor" evidence="1">
    <location>
        <position position="133"/>
    </location>
</feature>
<feature type="active site" description="Proton acceptor" evidence="1">
    <location>
        <position position="235"/>
    </location>
</feature>
<feature type="binding site" evidence="1">
    <location>
        <position position="161"/>
    </location>
    <ligand>
        <name>Mg(2+)</name>
        <dbReference type="ChEBI" id="CHEBI:18420"/>
    </ligand>
</feature>
<feature type="binding site" evidence="1">
    <location>
        <position position="190"/>
    </location>
    <ligand>
        <name>Mg(2+)</name>
        <dbReference type="ChEBI" id="CHEBI:18420"/>
    </ligand>
</feature>
<feature type="binding site" evidence="1">
    <location>
        <position position="213"/>
    </location>
    <ligand>
        <name>Mg(2+)</name>
        <dbReference type="ChEBI" id="CHEBI:18420"/>
    </ligand>
</feature>
<proteinExistence type="inferred from homology"/>
<protein>
    <recommendedName>
        <fullName evidence="1">o-succinylbenzoate synthase</fullName>
        <shortName evidence="1">OSB synthase</shortName>
        <shortName evidence="1">OSBS</shortName>
        <ecNumber evidence="1">4.2.1.113</ecNumber>
    </recommendedName>
    <alternativeName>
        <fullName evidence="1">4-(2'-carboxyphenyl)-4-oxybutyric acid synthase</fullName>
    </alternativeName>
    <alternativeName>
        <fullName evidence="1">o-succinylbenzoic acid synthase</fullName>
    </alternativeName>
</protein>
<comment type="function">
    <text evidence="1">Converts 2-succinyl-6-hydroxy-2,4-cyclohexadiene-1-carboxylate (SHCHC) to 2-succinylbenzoate (OSB).</text>
</comment>
<comment type="catalytic activity">
    <reaction evidence="1">
        <text>(1R,6R)-6-hydroxy-2-succinyl-cyclohexa-2,4-diene-1-carboxylate = 2-succinylbenzoate + H2O</text>
        <dbReference type="Rhea" id="RHEA:10196"/>
        <dbReference type="ChEBI" id="CHEBI:15377"/>
        <dbReference type="ChEBI" id="CHEBI:18325"/>
        <dbReference type="ChEBI" id="CHEBI:58689"/>
        <dbReference type="EC" id="4.2.1.113"/>
    </reaction>
</comment>
<comment type="cofactor">
    <cofactor evidence="1">
        <name>a divalent metal cation</name>
        <dbReference type="ChEBI" id="CHEBI:60240"/>
    </cofactor>
</comment>
<comment type="pathway">
    <text evidence="1">Quinol/quinone metabolism; 1,4-dihydroxy-2-naphthoate biosynthesis; 1,4-dihydroxy-2-naphthoate from chorismate: step 4/7.</text>
</comment>
<comment type="pathway">
    <text evidence="1">Quinol/quinone metabolism; menaquinone biosynthesis.</text>
</comment>
<comment type="similarity">
    <text evidence="1">Belongs to the mandelate racemase/muconate lactonizing enzyme family. MenC type 1 subfamily.</text>
</comment>
<keyword id="KW-0456">Lyase</keyword>
<keyword id="KW-0460">Magnesium</keyword>
<keyword id="KW-0474">Menaquinone biosynthesis</keyword>
<keyword id="KW-0479">Metal-binding</keyword>
<name>MENC_ECOUT</name>
<accession>Q1R9F3</accession>
<sequence>MRSAQVYRWQIPMDAGVVLRDRRLKTRDGLYVCLREGEREGWGEISPLPGFSQETWEDAQSVLLAWVNNWLAGDCEIPQMPSVAFGVSCALAELAETLPQAANYRAAPLCNGDPDDLILKLADMPGEKVAKVKVGLYEAVRDGMVVNLLLEAIPDLHLRLDANRAWTPLKGQQFAKYVNPDYRHRIAFLEEPCKTRDDSRAFARETGIAIAWDESLREPDFAFVAEEGVRAVVIKPTLTGSLDKVREQVQAAHALGLTAVISSSIESSLGLTQLARIAAWLTPDTIPGLDTLDLMQAQQVRRWPGSPLPLVDVDALERLL</sequence>
<organism>
    <name type="scientific">Escherichia coli (strain UTI89 / UPEC)</name>
    <dbReference type="NCBI Taxonomy" id="364106"/>
    <lineage>
        <taxon>Bacteria</taxon>
        <taxon>Pseudomonadati</taxon>
        <taxon>Pseudomonadota</taxon>
        <taxon>Gammaproteobacteria</taxon>
        <taxon>Enterobacterales</taxon>
        <taxon>Enterobacteriaceae</taxon>
        <taxon>Escherichia</taxon>
    </lineage>
</organism>
<reference key="1">
    <citation type="journal article" date="2006" name="Proc. Natl. Acad. Sci. U.S.A.">
        <title>Identification of genes subject to positive selection in uropathogenic strains of Escherichia coli: a comparative genomics approach.</title>
        <authorList>
            <person name="Chen S.L."/>
            <person name="Hung C.-S."/>
            <person name="Xu J."/>
            <person name="Reigstad C.S."/>
            <person name="Magrini V."/>
            <person name="Sabo A."/>
            <person name="Blasiar D."/>
            <person name="Bieri T."/>
            <person name="Meyer R.R."/>
            <person name="Ozersky P."/>
            <person name="Armstrong J.R."/>
            <person name="Fulton R.S."/>
            <person name="Latreille J.P."/>
            <person name="Spieth J."/>
            <person name="Hooton T.M."/>
            <person name="Mardis E.R."/>
            <person name="Hultgren S.J."/>
            <person name="Gordon J.I."/>
        </authorList>
    </citation>
    <scope>NUCLEOTIDE SEQUENCE [LARGE SCALE GENOMIC DNA]</scope>
    <source>
        <strain>UTI89 / UPEC</strain>
    </source>
</reference>
<dbReference type="EC" id="4.2.1.113" evidence="1"/>
<dbReference type="EMBL" id="CP000243">
    <property type="protein sequence ID" value="ABE08011.1"/>
    <property type="molecule type" value="Genomic_DNA"/>
</dbReference>
<dbReference type="RefSeq" id="WP_001255587.1">
    <property type="nucleotide sequence ID" value="NZ_CP064825.1"/>
</dbReference>
<dbReference type="SMR" id="Q1R9F3"/>
<dbReference type="KEGG" id="eci:UTI89_C2544"/>
<dbReference type="HOGENOM" id="CLU_030273_0_1_6"/>
<dbReference type="UniPathway" id="UPA00079"/>
<dbReference type="UniPathway" id="UPA01057">
    <property type="reaction ID" value="UER00165"/>
</dbReference>
<dbReference type="Proteomes" id="UP000001952">
    <property type="component" value="Chromosome"/>
</dbReference>
<dbReference type="GO" id="GO:0000287">
    <property type="term" value="F:magnesium ion binding"/>
    <property type="evidence" value="ECO:0007669"/>
    <property type="project" value="UniProtKB-UniRule"/>
</dbReference>
<dbReference type="GO" id="GO:0043748">
    <property type="term" value="F:O-succinylbenzoate synthase activity"/>
    <property type="evidence" value="ECO:0007669"/>
    <property type="project" value="UniProtKB-EC"/>
</dbReference>
<dbReference type="GO" id="GO:0009234">
    <property type="term" value="P:menaquinone biosynthetic process"/>
    <property type="evidence" value="ECO:0007669"/>
    <property type="project" value="UniProtKB-UniRule"/>
</dbReference>
<dbReference type="CDD" id="cd03320">
    <property type="entry name" value="OSBS"/>
    <property type="match status" value="1"/>
</dbReference>
<dbReference type="FunFam" id="3.20.20.120:FF:000006">
    <property type="entry name" value="o-succinylbenzoate synthase"/>
    <property type="match status" value="1"/>
</dbReference>
<dbReference type="FunFam" id="3.30.390.10:FF:000005">
    <property type="entry name" value="o-succinylbenzoate synthase"/>
    <property type="match status" value="1"/>
</dbReference>
<dbReference type="Gene3D" id="3.20.20.120">
    <property type="entry name" value="Enolase-like C-terminal domain"/>
    <property type="match status" value="1"/>
</dbReference>
<dbReference type="Gene3D" id="3.30.390.10">
    <property type="entry name" value="Enolase-like, N-terminal domain"/>
    <property type="match status" value="1"/>
</dbReference>
<dbReference type="HAMAP" id="MF_00470">
    <property type="entry name" value="MenC_1"/>
    <property type="match status" value="1"/>
</dbReference>
<dbReference type="InterPro" id="IPR036849">
    <property type="entry name" value="Enolase-like_C_sf"/>
</dbReference>
<dbReference type="InterPro" id="IPR029017">
    <property type="entry name" value="Enolase-like_N"/>
</dbReference>
<dbReference type="InterPro" id="IPR029065">
    <property type="entry name" value="Enolase_C-like"/>
</dbReference>
<dbReference type="InterPro" id="IPR013342">
    <property type="entry name" value="Mandelate_racemase_C"/>
</dbReference>
<dbReference type="InterPro" id="IPR010196">
    <property type="entry name" value="OSB_synthase_MenC1"/>
</dbReference>
<dbReference type="InterPro" id="IPR041338">
    <property type="entry name" value="OSBS_N"/>
</dbReference>
<dbReference type="NCBIfam" id="TIGR01927">
    <property type="entry name" value="menC_gam_Gplu"/>
    <property type="match status" value="1"/>
</dbReference>
<dbReference type="NCBIfam" id="NF003473">
    <property type="entry name" value="PRK05105.1"/>
    <property type="match status" value="1"/>
</dbReference>
<dbReference type="PANTHER" id="PTHR48073:SF2">
    <property type="entry name" value="O-SUCCINYLBENZOATE SYNTHASE"/>
    <property type="match status" value="1"/>
</dbReference>
<dbReference type="PANTHER" id="PTHR48073">
    <property type="entry name" value="O-SUCCINYLBENZOATE SYNTHASE-RELATED"/>
    <property type="match status" value="1"/>
</dbReference>
<dbReference type="Pfam" id="PF21508">
    <property type="entry name" value="MenC_N"/>
    <property type="match status" value="1"/>
</dbReference>
<dbReference type="Pfam" id="PF13378">
    <property type="entry name" value="MR_MLE_C"/>
    <property type="match status" value="1"/>
</dbReference>
<dbReference type="SFLD" id="SFLDS00001">
    <property type="entry name" value="Enolase"/>
    <property type="match status" value="1"/>
</dbReference>
<dbReference type="SFLD" id="SFLDF00009">
    <property type="entry name" value="o-succinylbenzoate_synthase"/>
    <property type="match status" value="1"/>
</dbReference>
<dbReference type="SMART" id="SM00922">
    <property type="entry name" value="MR_MLE"/>
    <property type="match status" value="1"/>
</dbReference>
<dbReference type="SUPFAM" id="SSF51604">
    <property type="entry name" value="Enolase C-terminal domain-like"/>
    <property type="match status" value="1"/>
</dbReference>
<dbReference type="SUPFAM" id="SSF54826">
    <property type="entry name" value="Enolase N-terminal domain-like"/>
    <property type="match status" value="1"/>
</dbReference>
<gene>
    <name evidence="1" type="primary">menC</name>
    <name type="ordered locus">UTI89_C2544</name>
</gene>